<name>YOW5_CAEEL</name>
<accession>P30651</accession>
<dbReference type="EMBL" id="Z11126">
    <property type="protein sequence ID" value="CAA77474.2"/>
    <property type="molecule type" value="Genomic_DNA"/>
</dbReference>
<dbReference type="PIR" id="S23243">
    <property type="entry name" value="S23243"/>
</dbReference>
<dbReference type="RefSeq" id="NP_498979.1">
    <property type="nucleotide sequence ID" value="NM_066578.8"/>
</dbReference>
<dbReference type="SMR" id="P30651"/>
<dbReference type="BioGRID" id="41464">
    <property type="interactions" value="4"/>
</dbReference>
<dbReference type="FunCoup" id="P30651">
    <property type="interactions" value="1619"/>
</dbReference>
<dbReference type="IntAct" id="P30651">
    <property type="interactions" value="1"/>
</dbReference>
<dbReference type="PaxDb" id="6239-ZK643.5"/>
<dbReference type="PeptideAtlas" id="P30651"/>
<dbReference type="EnsemblMetazoa" id="ZK643.5.1">
    <property type="protein sequence ID" value="ZK643.5.1"/>
    <property type="gene ID" value="WBGene00014036"/>
</dbReference>
<dbReference type="GeneID" id="176263"/>
<dbReference type="KEGG" id="cel:CELE_ZK643.5"/>
<dbReference type="UCSC" id="ZK643.5">
    <property type="organism name" value="c. elegans"/>
</dbReference>
<dbReference type="AGR" id="WB:WBGene00014036"/>
<dbReference type="CTD" id="176263"/>
<dbReference type="WormBase" id="ZK643.5">
    <property type="protein sequence ID" value="CE24732"/>
    <property type="gene ID" value="WBGene00014036"/>
</dbReference>
<dbReference type="eggNOG" id="ENOG502S543">
    <property type="taxonomic scope" value="Eukaryota"/>
</dbReference>
<dbReference type="HOGENOM" id="CLU_028302_0_0_1"/>
<dbReference type="InParanoid" id="P30651"/>
<dbReference type="OMA" id="FNAHDKA"/>
<dbReference type="OrthoDB" id="5865792at2759"/>
<dbReference type="PRO" id="PR:P30651"/>
<dbReference type="Proteomes" id="UP000001940">
    <property type="component" value="Chromosome III"/>
</dbReference>
<dbReference type="Bgee" id="WBGene00014036">
    <property type="expression patterns" value="Expressed in pharyngeal muscle cell (C elegans) and 4 other cell types or tissues"/>
</dbReference>
<gene>
    <name type="ORF">ZK643.5</name>
</gene>
<sequence>MTTVEEDLLLNEPVATEYDGLTAIDEDFLLGAGDVSRKGTQESTDDLLGSSEPFDQEDILDTVPEQTDENEDEAGDDELESEKEELDYDEEEDDEDRRERTSRYTSEKKGSRKDSVEGDENKKENGQDETKRSGIPSLFDKTITNNPMKSGDQPIGVILRIEGEAERVFYPPPSFMEPKLNIVPRLPNGIPLIGVPSSHGRAGFGANYQDQARMAAGGGMAGMPMGWENQVNAFLNNTTKSKSRGRDTRKRRSSSYSSTSSSSDGRSRSRSSSRSDRRRRDDRKRPREDRDRKDYRRDGRRDGRRDDRKRHDDRRRDSYHRDSDKDIKRRKEQSKHSAMESAKALGLSNDYIDQVNEQKRKREEIVRKKEERRHAPVSEKKEVPTTVSTNTSSAAYANSKDKTKAYLAVNVTGVQQLPTAVKKIEAIASELGPIKKCWRSDEDVVSIIFNAHDKAKDFMLKHNGKVLSGLRITVSLEKKFLNLNDVN</sequence>
<protein>
    <recommendedName>
        <fullName>Uncharacterized protein ZK643.5</fullName>
    </recommendedName>
</protein>
<organism>
    <name type="scientific">Caenorhabditis elegans</name>
    <dbReference type="NCBI Taxonomy" id="6239"/>
    <lineage>
        <taxon>Eukaryota</taxon>
        <taxon>Metazoa</taxon>
        <taxon>Ecdysozoa</taxon>
        <taxon>Nematoda</taxon>
        <taxon>Chromadorea</taxon>
        <taxon>Rhabditida</taxon>
        <taxon>Rhabditina</taxon>
        <taxon>Rhabditomorpha</taxon>
        <taxon>Rhabditoidea</taxon>
        <taxon>Rhabditidae</taxon>
        <taxon>Peloderinae</taxon>
        <taxon>Caenorhabditis</taxon>
    </lineage>
</organism>
<reference key="1">
    <citation type="journal article" date="1992" name="Nature">
        <title>The C. elegans genome sequencing project: a beginning.</title>
        <authorList>
            <person name="Sulston J."/>
            <person name="Du Z."/>
            <person name="Thomas K."/>
            <person name="Wilson R."/>
            <person name="Hillier L."/>
            <person name="Staden R."/>
            <person name="Halloran N."/>
            <person name="Green P."/>
            <person name="Thierry-Mieg J."/>
            <person name="Qiu L."/>
            <person name="Dear S."/>
            <person name="Coulson A."/>
            <person name="Craxton M."/>
            <person name="Durbin R."/>
            <person name="Berks M."/>
            <person name="Metzstein M."/>
            <person name="Hawkins T."/>
            <person name="Ainscough R."/>
            <person name="Waterston R."/>
        </authorList>
    </citation>
    <scope>NUCLEOTIDE SEQUENCE [LARGE SCALE GENOMIC DNA]</scope>
    <source>
        <strain>Bristol N2</strain>
    </source>
</reference>
<reference key="2">
    <citation type="journal article" date="1998" name="Science">
        <title>Genome sequence of the nematode C. elegans: a platform for investigating biology.</title>
        <authorList>
            <consortium name="The C. elegans sequencing consortium"/>
        </authorList>
    </citation>
    <scope>NUCLEOTIDE SEQUENCE [LARGE SCALE GENOMIC DNA]</scope>
    <source>
        <strain>Bristol N2</strain>
    </source>
</reference>
<evidence type="ECO:0000256" key="1">
    <source>
        <dbReference type="SAM" id="MobiDB-lite"/>
    </source>
</evidence>
<proteinExistence type="predicted"/>
<feature type="chain" id="PRO_0000065533" description="Uncharacterized protein ZK643.5">
    <location>
        <begin position="1"/>
        <end position="487"/>
    </location>
</feature>
<feature type="region of interest" description="Disordered" evidence="1">
    <location>
        <begin position="35"/>
        <end position="153"/>
    </location>
</feature>
<feature type="region of interest" description="Disordered" evidence="1">
    <location>
        <begin position="237"/>
        <end position="345"/>
    </location>
</feature>
<feature type="region of interest" description="Disordered" evidence="1">
    <location>
        <begin position="358"/>
        <end position="395"/>
    </location>
</feature>
<feature type="compositionally biased region" description="Acidic residues" evidence="1">
    <location>
        <begin position="54"/>
        <end position="96"/>
    </location>
</feature>
<feature type="compositionally biased region" description="Basic and acidic residues" evidence="1">
    <location>
        <begin position="97"/>
        <end position="132"/>
    </location>
</feature>
<feature type="compositionally biased region" description="Basic residues" evidence="1">
    <location>
        <begin position="241"/>
        <end position="253"/>
    </location>
</feature>
<feature type="compositionally biased region" description="Low complexity" evidence="1">
    <location>
        <begin position="254"/>
        <end position="264"/>
    </location>
</feature>
<feature type="compositionally biased region" description="Basic and acidic residues" evidence="1">
    <location>
        <begin position="273"/>
        <end position="338"/>
    </location>
</feature>
<feature type="compositionally biased region" description="Basic and acidic residues" evidence="1">
    <location>
        <begin position="358"/>
        <end position="383"/>
    </location>
</feature>
<feature type="compositionally biased region" description="Low complexity" evidence="1">
    <location>
        <begin position="385"/>
        <end position="395"/>
    </location>
</feature>
<keyword id="KW-1185">Reference proteome</keyword>